<accession>O65685</accession>
<organism>
    <name type="scientific">Arabidopsis thaliana</name>
    <name type="common">Mouse-ear cress</name>
    <dbReference type="NCBI Taxonomy" id="3702"/>
    <lineage>
        <taxon>Eukaryota</taxon>
        <taxon>Viridiplantae</taxon>
        <taxon>Streptophyta</taxon>
        <taxon>Embryophyta</taxon>
        <taxon>Tracheophyta</taxon>
        <taxon>Spermatophyta</taxon>
        <taxon>Magnoliopsida</taxon>
        <taxon>eudicotyledons</taxon>
        <taxon>Gunneridae</taxon>
        <taxon>Pentapetalae</taxon>
        <taxon>rosids</taxon>
        <taxon>malvids</taxon>
        <taxon>Brassicales</taxon>
        <taxon>Brassicaceae</taxon>
        <taxon>Camelineae</taxon>
        <taxon>Arabidopsis</taxon>
    </lineage>
</organism>
<gene>
    <name type="primary">BLH6</name>
    <name type="ordered locus">At4g34610</name>
    <name type="ORF">T4L20.190</name>
</gene>
<reference key="1">
    <citation type="journal article" date="1999" name="Nature">
        <title>Sequence and analysis of chromosome 4 of the plant Arabidopsis thaliana.</title>
        <authorList>
            <person name="Mayer K.F.X."/>
            <person name="Schueller C."/>
            <person name="Wambutt R."/>
            <person name="Murphy G."/>
            <person name="Volckaert G."/>
            <person name="Pohl T."/>
            <person name="Duesterhoeft A."/>
            <person name="Stiekema W."/>
            <person name="Entian K.-D."/>
            <person name="Terryn N."/>
            <person name="Harris B."/>
            <person name="Ansorge W."/>
            <person name="Brandt P."/>
            <person name="Grivell L.A."/>
            <person name="Rieger M."/>
            <person name="Weichselgartner M."/>
            <person name="de Simone V."/>
            <person name="Obermaier B."/>
            <person name="Mache R."/>
            <person name="Mueller M."/>
            <person name="Kreis M."/>
            <person name="Delseny M."/>
            <person name="Puigdomenech P."/>
            <person name="Watson M."/>
            <person name="Schmidtheini T."/>
            <person name="Reichert B."/>
            <person name="Portetelle D."/>
            <person name="Perez-Alonso M."/>
            <person name="Boutry M."/>
            <person name="Bancroft I."/>
            <person name="Vos P."/>
            <person name="Hoheisel J."/>
            <person name="Zimmermann W."/>
            <person name="Wedler H."/>
            <person name="Ridley P."/>
            <person name="Langham S.-A."/>
            <person name="McCullagh B."/>
            <person name="Bilham L."/>
            <person name="Robben J."/>
            <person name="van der Schueren J."/>
            <person name="Grymonprez B."/>
            <person name="Chuang Y.-J."/>
            <person name="Vandenbussche F."/>
            <person name="Braeken M."/>
            <person name="Weltjens I."/>
            <person name="Voet M."/>
            <person name="Bastiaens I."/>
            <person name="Aert R."/>
            <person name="Defoor E."/>
            <person name="Weitzenegger T."/>
            <person name="Bothe G."/>
            <person name="Ramsperger U."/>
            <person name="Hilbert H."/>
            <person name="Braun M."/>
            <person name="Holzer E."/>
            <person name="Brandt A."/>
            <person name="Peters S."/>
            <person name="van Staveren M."/>
            <person name="Dirkse W."/>
            <person name="Mooijman P."/>
            <person name="Klein Lankhorst R."/>
            <person name="Rose M."/>
            <person name="Hauf J."/>
            <person name="Koetter P."/>
            <person name="Berneiser S."/>
            <person name="Hempel S."/>
            <person name="Feldpausch M."/>
            <person name="Lamberth S."/>
            <person name="Van den Daele H."/>
            <person name="De Keyser A."/>
            <person name="Buysshaert C."/>
            <person name="Gielen J."/>
            <person name="Villarroel R."/>
            <person name="De Clercq R."/>
            <person name="van Montagu M."/>
            <person name="Rogers J."/>
            <person name="Cronin A."/>
            <person name="Quail M.A."/>
            <person name="Bray-Allen S."/>
            <person name="Clark L."/>
            <person name="Doggett J."/>
            <person name="Hall S."/>
            <person name="Kay M."/>
            <person name="Lennard N."/>
            <person name="McLay K."/>
            <person name="Mayes R."/>
            <person name="Pettett A."/>
            <person name="Rajandream M.A."/>
            <person name="Lyne M."/>
            <person name="Benes V."/>
            <person name="Rechmann S."/>
            <person name="Borkova D."/>
            <person name="Bloecker H."/>
            <person name="Scharfe M."/>
            <person name="Grimm M."/>
            <person name="Loehnert T.-H."/>
            <person name="Dose S."/>
            <person name="de Haan M."/>
            <person name="Maarse A.C."/>
            <person name="Schaefer M."/>
            <person name="Mueller-Auer S."/>
            <person name="Gabel C."/>
            <person name="Fuchs M."/>
            <person name="Fartmann B."/>
            <person name="Granderath K."/>
            <person name="Dauner D."/>
            <person name="Herzl A."/>
            <person name="Neumann S."/>
            <person name="Argiriou A."/>
            <person name="Vitale D."/>
            <person name="Liguori R."/>
            <person name="Piravandi E."/>
            <person name="Massenet O."/>
            <person name="Quigley F."/>
            <person name="Clabauld G."/>
            <person name="Muendlein A."/>
            <person name="Felber R."/>
            <person name="Schnabl S."/>
            <person name="Hiller R."/>
            <person name="Schmidt W."/>
            <person name="Lecharny A."/>
            <person name="Aubourg S."/>
            <person name="Chefdor F."/>
            <person name="Cooke R."/>
            <person name="Berger C."/>
            <person name="Monfort A."/>
            <person name="Casacuberta E."/>
            <person name="Gibbons T."/>
            <person name="Weber N."/>
            <person name="Vandenbol M."/>
            <person name="Bargues M."/>
            <person name="Terol J."/>
            <person name="Torres A."/>
            <person name="Perez-Perez A."/>
            <person name="Purnelle B."/>
            <person name="Bent E."/>
            <person name="Johnson S."/>
            <person name="Tacon D."/>
            <person name="Jesse T."/>
            <person name="Heijnen L."/>
            <person name="Schwarz S."/>
            <person name="Scholler P."/>
            <person name="Heber S."/>
            <person name="Francs P."/>
            <person name="Bielke C."/>
            <person name="Frishman D."/>
            <person name="Haase D."/>
            <person name="Lemcke K."/>
            <person name="Mewes H.-W."/>
            <person name="Stocker S."/>
            <person name="Zaccaria P."/>
            <person name="Bevan M."/>
            <person name="Wilson R.K."/>
            <person name="de la Bastide M."/>
            <person name="Habermann K."/>
            <person name="Parnell L."/>
            <person name="Dedhia N."/>
            <person name="Gnoj L."/>
            <person name="Schutz K."/>
            <person name="Huang E."/>
            <person name="Spiegel L."/>
            <person name="Sekhon M."/>
            <person name="Murray J."/>
            <person name="Sheet P."/>
            <person name="Cordes M."/>
            <person name="Abu-Threideh J."/>
            <person name="Stoneking T."/>
            <person name="Kalicki J."/>
            <person name="Graves T."/>
            <person name="Harmon G."/>
            <person name="Edwards J."/>
            <person name="Latreille P."/>
            <person name="Courtney L."/>
            <person name="Cloud J."/>
            <person name="Abbott A."/>
            <person name="Scott K."/>
            <person name="Johnson D."/>
            <person name="Minx P."/>
            <person name="Bentley D."/>
            <person name="Fulton B."/>
            <person name="Miller N."/>
            <person name="Greco T."/>
            <person name="Kemp K."/>
            <person name="Kramer J."/>
            <person name="Fulton L."/>
            <person name="Mardis E."/>
            <person name="Dante M."/>
            <person name="Pepin K."/>
            <person name="Hillier L.W."/>
            <person name="Nelson J."/>
            <person name="Spieth J."/>
            <person name="Ryan E."/>
            <person name="Andrews S."/>
            <person name="Geisel C."/>
            <person name="Layman D."/>
            <person name="Du H."/>
            <person name="Ali J."/>
            <person name="Berghoff A."/>
            <person name="Jones K."/>
            <person name="Drone K."/>
            <person name="Cotton M."/>
            <person name="Joshu C."/>
            <person name="Antonoiu B."/>
            <person name="Zidanic M."/>
            <person name="Strong C."/>
            <person name="Sun H."/>
            <person name="Lamar B."/>
            <person name="Yordan C."/>
            <person name="Ma P."/>
            <person name="Zhong J."/>
            <person name="Preston R."/>
            <person name="Vil D."/>
            <person name="Shekher M."/>
            <person name="Matero A."/>
            <person name="Shah R."/>
            <person name="Swaby I.K."/>
            <person name="O'Shaughnessy A."/>
            <person name="Rodriguez M."/>
            <person name="Hoffman J."/>
            <person name="Till S."/>
            <person name="Granat S."/>
            <person name="Shohdy N."/>
            <person name="Hasegawa A."/>
            <person name="Hameed A."/>
            <person name="Lodhi M."/>
            <person name="Johnson A."/>
            <person name="Chen E."/>
            <person name="Marra M.A."/>
            <person name="Martienssen R."/>
            <person name="McCombie W.R."/>
        </authorList>
    </citation>
    <scope>NUCLEOTIDE SEQUENCE [LARGE SCALE GENOMIC DNA]</scope>
    <source>
        <strain>cv. Columbia</strain>
    </source>
</reference>
<reference key="2">
    <citation type="journal article" date="2017" name="Plant J.">
        <title>Araport11: a complete reannotation of the Arabidopsis thaliana reference genome.</title>
        <authorList>
            <person name="Cheng C.Y."/>
            <person name="Krishnakumar V."/>
            <person name="Chan A.P."/>
            <person name="Thibaud-Nissen F."/>
            <person name="Schobel S."/>
            <person name="Town C.D."/>
        </authorList>
    </citation>
    <scope>GENOME REANNOTATION</scope>
    <source>
        <strain>cv. Columbia</strain>
    </source>
</reference>
<reference key="3">
    <citation type="submission" date="2004-03" db="EMBL/GenBank/DDBJ databases">
        <title>Arabidopsis ORF clones.</title>
        <authorList>
            <person name="Cheuk R.F."/>
            <person name="Chen H."/>
            <person name="Kim C.J."/>
            <person name="Shinn P."/>
            <person name="Carninci P."/>
            <person name="Hayashizaki Y."/>
            <person name="Ishida J."/>
            <person name="Kamiya A."/>
            <person name="Kawai J."/>
            <person name="Narusaka M."/>
            <person name="Sakurai T."/>
            <person name="Satou M."/>
            <person name="Seki M."/>
            <person name="Shinozaki K."/>
            <person name="Ecker J.R."/>
        </authorList>
    </citation>
    <scope>NUCLEOTIDE SEQUENCE [LARGE SCALE MRNA]</scope>
    <source>
        <strain>cv. Columbia</strain>
    </source>
</reference>
<reference key="4">
    <citation type="journal article" date="2004" name="Curr. Biol.">
        <title>Competence to respond to floral inductive signals requires the homeobox genes PENNYWISE and POUND-FOOLISH.</title>
        <authorList>
            <person name="Smith H.M.S."/>
            <person name="Campbell B.C.C."/>
            <person name="Hake S."/>
        </authorList>
    </citation>
    <scope>GENE FAMILY ORGANIZATION</scope>
</reference>
<reference key="5">
    <citation type="journal article" date="2005" name="Proc. Natl. Acad. Sci. U.S.A.">
        <title>A central role of Arabidopsis thaliana ovate family proteins in networking and subcellular localization of 3-aa loop extension homeodomain proteins.</title>
        <authorList>
            <person name="Hackbusch J."/>
            <person name="Richter K."/>
            <person name="Muller J."/>
            <person name="Salamini F."/>
            <person name="Uhrig J.F."/>
        </authorList>
    </citation>
    <scope>INTERACTION WITH OFP2; OFP4 AND OFP5</scope>
</reference>
<sequence length="532" mass="59609">MENYPETQFIPGDSMIQNAIVSYSEESAGRERRTEANNVSASQERQALSRFGGVPQMQNIGQDFGSWRDQASDRNGFQLMSAMAGATGILQTGQGLSLSLGSQILPGIHQISHQNMAPRGNEYATQSFPGGNQNLDVVRTIPNSKYLKAAQQLLDEAVNVKKALKQFQAEGDKNNENPQEPNQSTQDSSTNPPADISQSERQEMQSKLTKLLSMLDEVDRRYKQYYQQMQIVVSSFDVIAGYGAAKPYTALALQTISRHFRSLRDAISGQILVLRKCLGEQQDGSDGKRVGIISRLKYVDQHLRQQRGFMQPQAWRPQRGLPENSVLILRAWLFEHFLHPYPKDSDKIMLARQTGLSRGQVSNWFINARVRLWKPMVEEIYKEEFTENDSNSSSENTPKMSEIGPVAADDEDRAREFSQDQTKPDHGHGYGEETRGMVQGSHMDGRRFMAVEPTYHVADTSRLGRGDVSLTLGLQNSQGQDNVVAMSSEAYNNFSGVDIYENAIPGDEMEYVNPGSRQNRINSSQLVHDFVA</sequence>
<proteinExistence type="evidence at protein level"/>
<feature type="chain" id="PRO_0000315462" description="BEL1-like homeodomain protein 6">
    <location>
        <begin position="1"/>
        <end position="532"/>
    </location>
</feature>
<feature type="DNA-binding region" description="Homeobox" evidence="2">
    <location>
        <begin position="314"/>
        <end position="376"/>
    </location>
</feature>
<feature type="region of interest" description="SR/KY domain">
    <location>
        <begin position="144"/>
        <end position="160"/>
    </location>
</feature>
<feature type="region of interest" description="Disordered" evidence="3">
    <location>
        <begin position="170"/>
        <end position="203"/>
    </location>
</feature>
<feature type="region of interest" description="BELL domain">
    <location>
        <begin position="200"/>
        <end position="271"/>
    </location>
</feature>
<feature type="region of interest" description="Disordered" evidence="3">
    <location>
        <begin position="385"/>
        <end position="434"/>
    </location>
</feature>
<feature type="compositionally biased region" description="Polar residues" evidence="3">
    <location>
        <begin position="176"/>
        <end position="197"/>
    </location>
</feature>
<feature type="compositionally biased region" description="Basic and acidic residues" evidence="3">
    <location>
        <begin position="412"/>
        <end position="434"/>
    </location>
</feature>
<protein>
    <recommendedName>
        <fullName>BEL1-like homeodomain protein 6</fullName>
        <shortName>BEL1-like protein 6</shortName>
    </recommendedName>
</protein>
<keyword id="KW-0238">DNA-binding</keyword>
<keyword id="KW-0371">Homeobox</keyword>
<keyword id="KW-0539">Nucleus</keyword>
<keyword id="KW-1185">Reference proteome</keyword>
<keyword id="KW-0804">Transcription</keyword>
<keyword id="KW-0805">Transcription regulation</keyword>
<dbReference type="EMBL" id="AL023094">
    <property type="protein sequence ID" value="CAA18840.1"/>
    <property type="molecule type" value="Genomic_DNA"/>
</dbReference>
<dbReference type="EMBL" id="AL161585">
    <property type="protein sequence ID" value="CAB80178.1"/>
    <property type="molecule type" value="Genomic_DNA"/>
</dbReference>
<dbReference type="EMBL" id="CP002687">
    <property type="protein sequence ID" value="AEE86399.1"/>
    <property type="molecule type" value="Genomic_DNA"/>
</dbReference>
<dbReference type="EMBL" id="CP002687">
    <property type="protein sequence ID" value="AEE86400.1"/>
    <property type="molecule type" value="Genomic_DNA"/>
</dbReference>
<dbReference type="EMBL" id="CP002687">
    <property type="protein sequence ID" value="ANM66951.1"/>
    <property type="molecule type" value="Genomic_DNA"/>
</dbReference>
<dbReference type="EMBL" id="CP002687">
    <property type="protein sequence ID" value="ANM66952.1"/>
    <property type="molecule type" value="Genomic_DNA"/>
</dbReference>
<dbReference type="EMBL" id="BT012291">
    <property type="protein sequence ID" value="AAS76778.1"/>
    <property type="molecule type" value="mRNA"/>
</dbReference>
<dbReference type="PIR" id="T05281">
    <property type="entry name" value="T05281"/>
</dbReference>
<dbReference type="RefSeq" id="NP_001119116.1">
    <property type="nucleotide sequence ID" value="NM_001125644.1"/>
</dbReference>
<dbReference type="RefSeq" id="NP_001328814.1">
    <property type="nucleotide sequence ID" value="NM_001342295.1"/>
</dbReference>
<dbReference type="RefSeq" id="NP_001328815.1">
    <property type="nucleotide sequence ID" value="NM_001342296.1"/>
</dbReference>
<dbReference type="RefSeq" id="NP_195187.1">
    <property type="nucleotide sequence ID" value="NM_119627.4"/>
</dbReference>
<dbReference type="SMR" id="O65685"/>
<dbReference type="BioGRID" id="14895">
    <property type="interactions" value="17"/>
</dbReference>
<dbReference type="FunCoup" id="O65685">
    <property type="interactions" value="30"/>
</dbReference>
<dbReference type="IntAct" id="O65685">
    <property type="interactions" value="17"/>
</dbReference>
<dbReference type="STRING" id="3702.O65685"/>
<dbReference type="PaxDb" id="3702-AT4G34610.1"/>
<dbReference type="ProteomicsDB" id="240355"/>
<dbReference type="EnsemblPlants" id="AT4G34610.1">
    <property type="protein sequence ID" value="AT4G34610.1"/>
    <property type="gene ID" value="AT4G34610"/>
</dbReference>
<dbReference type="EnsemblPlants" id="AT4G34610.2">
    <property type="protein sequence ID" value="AT4G34610.2"/>
    <property type="gene ID" value="AT4G34610"/>
</dbReference>
<dbReference type="EnsemblPlants" id="AT4G34610.3">
    <property type="protein sequence ID" value="AT4G34610.3"/>
    <property type="gene ID" value="AT4G34610"/>
</dbReference>
<dbReference type="EnsemblPlants" id="AT4G34610.4">
    <property type="protein sequence ID" value="AT4G34610.4"/>
    <property type="gene ID" value="AT4G34610"/>
</dbReference>
<dbReference type="GeneID" id="829613"/>
<dbReference type="Gramene" id="AT4G34610.1">
    <property type="protein sequence ID" value="AT4G34610.1"/>
    <property type="gene ID" value="AT4G34610"/>
</dbReference>
<dbReference type="Gramene" id="AT4G34610.2">
    <property type="protein sequence ID" value="AT4G34610.2"/>
    <property type="gene ID" value="AT4G34610"/>
</dbReference>
<dbReference type="Gramene" id="AT4G34610.3">
    <property type="protein sequence ID" value="AT4G34610.3"/>
    <property type="gene ID" value="AT4G34610"/>
</dbReference>
<dbReference type="Gramene" id="AT4G34610.4">
    <property type="protein sequence ID" value="AT4G34610.4"/>
    <property type="gene ID" value="AT4G34610"/>
</dbReference>
<dbReference type="KEGG" id="ath:AT4G34610"/>
<dbReference type="Araport" id="AT4G34610"/>
<dbReference type="TAIR" id="AT4G34610">
    <property type="gene designation" value="BLH6"/>
</dbReference>
<dbReference type="eggNOG" id="KOG0773">
    <property type="taxonomic scope" value="Eukaryota"/>
</dbReference>
<dbReference type="HOGENOM" id="CLU_011058_6_0_1"/>
<dbReference type="InParanoid" id="O65685"/>
<dbReference type="OMA" id="MQPQAWR"/>
<dbReference type="PhylomeDB" id="O65685"/>
<dbReference type="PRO" id="PR:O65685"/>
<dbReference type="Proteomes" id="UP000006548">
    <property type="component" value="Chromosome 4"/>
</dbReference>
<dbReference type="ExpressionAtlas" id="O65685">
    <property type="expression patterns" value="baseline and differential"/>
</dbReference>
<dbReference type="GO" id="GO:0005634">
    <property type="term" value="C:nucleus"/>
    <property type="evidence" value="ECO:0007669"/>
    <property type="project" value="UniProtKB-SubCell"/>
</dbReference>
<dbReference type="GO" id="GO:0003700">
    <property type="term" value="F:DNA-binding transcription factor activity"/>
    <property type="evidence" value="ECO:0000250"/>
    <property type="project" value="TAIR"/>
</dbReference>
<dbReference type="GO" id="GO:0000976">
    <property type="term" value="F:transcription cis-regulatory region binding"/>
    <property type="evidence" value="ECO:0000353"/>
    <property type="project" value="TAIR"/>
</dbReference>
<dbReference type="CDD" id="cd00086">
    <property type="entry name" value="homeodomain"/>
    <property type="match status" value="1"/>
</dbReference>
<dbReference type="Gene3D" id="1.10.10.60">
    <property type="entry name" value="Homeodomain-like"/>
    <property type="match status" value="1"/>
</dbReference>
<dbReference type="InterPro" id="IPR001356">
    <property type="entry name" value="HD"/>
</dbReference>
<dbReference type="InterPro" id="IPR009057">
    <property type="entry name" value="Homeodomain-like_sf"/>
</dbReference>
<dbReference type="InterPro" id="IPR008422">
    <property type="entry name" value="KN_HD"/>
</dbReference>
<dbReference type="InterPro" id="IPR006563">
    <property type="entry name" value="POX_dom"/>
</dbReference>
<dbReference type="InterPro" id="IPR050224">
    <property type="entry name" value="TALE_homeobox"/>
</dbReference>
<dbReference type="PANTHER" id="PTHR11850">
    <property type="entry name" value="HOMEOBOX PROTEIN TRANSCRIPTION FACTORS"/>
    <property type="match status" value="1"/>
</dbReference>
<dbReference type="Pfam" id="PF05920">
    <property type="entry name" value="Homeobox_KN"/>
    <property type="match status" value="1"/>
</dbReference>
<dbReference type="Pfam" id="PF07526">
    <property type="entry name" value="POX"/>
    <property type="match status" value="1"/>
</dbReference>
<dbReference type="SMART" id="SM00389">
    <property type="entry name" value="HOX"/>
    <property type="match status" value="1"/>
</dbReference>
<dbReference type="SMART" id="SM00574">
    <property type="entry name" value="POX"/>
    <property type="match status" value="1"/>
</dbReference>
<dbReference type="SUPFAM" id="SSF46689">
    <property type="entry name" value="Homeodomain-like"/>
    <property type="match status" value="1"/>
</dbReference>
<dbReference type="PROSITE" id="PS00027">
    <property type="entry name" value="HOMEOBOX_1"/>
    <property type="match status" value="1"/>
</dbReference>
<dbReference type="PROSITE" id="PS50071">
    <property type="entry name" value="HOMEOBOX_2"/>
    <property type="match status" value="1"/>
</dbReference>
<name>BLH6_ARATH</name>
<comment type="subunit">
    <text evidence="1 4">May form heterodimeric complexes with TALE/KNOX proteins (By similarity). Interacts with OFP2, OFP4, and OFP5.</text>
</comment>
<comment type="interaction">
    <interactant intactId="EBI-1153881">
        <id>O65685</id>
    </interactant>
    <interactant intactId="EBI-530486">
        <id>P46639</id>
        <label>KNAT1</label>
    </interactant>
    <organismsDiffer>false</organismsDiffer>
    <experiments>4</experiments>
</comment>
<comment type="interaction">
    <interactant intactId="EBI-1153881">
        <id>O65685</id>
    </interactant>
    <interactant intactId="EBI-1153809">
        <id>P46640</id>
        <label>KNAT2</label>
    </interactant>
    <organismsDiffer>false</organismsDiffer>
    <experiments>3</experiments>
</comment>
<comment type="interaction">
    <interactant intactId="EBI-1153881">
        <id>O65685</id>
    </interactant>
    <interactant intactId="EBI-530499">
        <id>Q84JS6</id>
        <label>KNAT6</label>
    </interactant>
    <organismsDiffer>false</organismsDiffer>
    <experiments>3</experiments>
</comment>
<comment type="interaction">
    <interactant intactId="EBI-1153881">
        <id>O65685</id>
    </interactant>
    <interactant intactId="EBI-530523">
        <id>Q38874</id>
        <label>STM</label>
    </interactant>
    <organismsDiffer>false</organismsDiffer>
    <experiments>3</experiments>
</comment>
<comment type="subcellular location">
    <subcellularLocation>
        <location evidence="5">Nucleus</location>
    </subcellularLocation>
</comment>
<comment type="domain">
    <text>The SR/KY and BELL domains are responsive for the interaction between the TALE/BELL proteins and the TALE/KNOX proteins.</text>
</comment>
<comment type="similarity">
    <text evidence="5">Belongs to the TALE/BELL homeobox family.</text>
</comment>
<evidence type="ECO:0000250" key="1"/>
<evidence type="ECO:0000255" key="2">
    <source>
        <dbReference type="PROSITE-ProRule" id="PRU00108"/>
    </source>
</evidence>
<evidence type="ECO:0000256" key="3">
    <source>
        <dbReference type="SAM" id="MobiDB-lite"/>
    </source>
</evidence>
<evidence type="ECO:0000269" key="4">
    <source>
    </source>
</evidence>
<evidence type="ECO:0000305" key="5"/>